<proteinExistence type="inferred from homology"/>
<keyword id="KW-0030">Aminoacyl-tRNA synthetase</keyword>
<keyword id="KW-0067">ATP-binding</keyword>
<keyword id="KW-0963">Cytoplasm</keyword>
<keyword id="KW-0436">Ligase</keyword>
<keyword id="KW-0479">Metal-binding</keyword>
<keyword id="KW-0547">Nucleotide-binding</keyword>
<keyword id="KW-0648">Protein biosynthesis</keyword>
<keyword id="KW-0694">RNA-binding</keyword>
<keyword id="KW-0820">tRNA-binding</keyword>
<keyword id="KW-0862">Zinc</keyword>
<gene>
    <name evidence="1" type="primary">alaS</name>
    <name type="ordered locus">BARBAKC583_0728</name>
</gene>
<reference key="1">
    <citation type="submission" date="2006-12" db="EMBL/GenBank/DDBJ databases">
        <authorList>
            <person name="Hendrix L."/>
            <person name="Mohamoud Y."/>
            <person name="Radune D."/>
            <person name="Shvartsbeyn A."/>
            <person name="Daugherty S."/>
            <person name="Dodson R."/>
            <person name="Durkin A.S."/>
            <person name="Harkins D."/>
            <person name="Huot H."/>
            <person name="Kothari S.P."/>
            <person name="Madupu R."/>
            <person name="Li J."/>
            <person name="Nelson W.C."/>
            <person name="Shrivastava S."/>
            <person name="Giglio M.G."/>
            <person name="Haft D."/>
            <person name="Selengut J."/>
            <person name="Fraser-Ligget C."/>
            <person name="Seshadri R."/>
        </authorList>
    </citation>
    <scope>NUCLEOTIDE SEQUENCE [LARGE SCALE GENOMIC DNA]</scope>
    <source>
        <strain>ATCC 35685 / KC583 / Herrer 020/F12,63</strain>
    </source>
</reference>
<dbReference type="EC" id="6.1.1.7" evidence="1"/>
<dbReference type="EMBL" id="CP000524">
    <property type="protein sequence ID" value="ABM44769.1"/>
    <property type="molecule type" value="Genomic_DNA"/>
</dbReference>
<dbReference type="RefSeq" id="WP_005766976.1">
    <property type="nucleotide sequence ID" value="NC_008783.1"/>
</dbReference>
<dbReference type="SMR" id="A1USS4"/>
<dbReference type="STRING" id="360095.BARBAKC583_0728"/>
<dbReference type="GeneID" id="4684786"/>
<dbReference type="KEGG" id="bbk:BARBAKC583_0728"/>
<dbReference type="PATRIC" id="fig|360095.6.peg.707"/>
<dbReference type="eggNOG" id="COG0013">
    <property type="taxonomic scope" value="Bacteria"/>
</dbReference>
<dbReference type="HOGENOM" id="CLU_004485_1_1_5"/>
<dbReference type="OrthoDB" id="9803884at2"/>
<dbReference type="Proteomes" id="UP000000643">
    <property type="component" value="Chromosome"/>
</dbReference>
<dbReference type="GO" id="GO:0005829">
    <property type="term" value="C:cytosol"/>
    <property type="evidence" value="ECO:0007669"/>
    <property type="project" value="TreeGrafter"/>
</dbReference>
<dbReference type="GO" id="GO:0004813">
    <property type="term" value="F:alanine-tRNA ligase activity"/>
    <property type="evidence" value="ECO:0007669"/>
    <property type="project" value="UniProtKB-UniRule"/>
</dbReference>
<dbReference type="GO" id="GO:0002161">
    <property type="term" value="F:aminoacyl-tRNA deacylase activity"/>
    <property type="evidence" value="ECO:0007669"/>
    <property type="project" value="TreeGrafter"/>
</dbReference>
<dbReference type="GO" id="GO:0005524">
    <property type="term" value="F:ATP binding"/>
    <property type="evidence" value="ECO:0007669"/>
    <property type="project" value="UniProtKB-UniRule"/>
</dbReference>
<dbReference type="GO" id="GO:0000049">
    <property type="term" value="F:tRNA binding"/>
    <property type="evidence" value="ECO:0007669"/>
    <property type="project" value="UniProtKB-KW"/>
</dbReference>
<dbReference type="GO" id="GO:0008270">
    <property type="term" value="F:zinc ion binding"/>
    <property type="evidence" value="ECO:0007669"/>
    <property type="project" value="UniProtKB-UniRule"/>
</dbReference>
<dbReference type="GO" id="GO:0006419">
    <property type="term" value="P:alanyl-tRNA aminoacylation"/>
    <property type="evidence" value="ECO:0007669"/>
    <property type="project" value="UniProtKB-UniRule"/>
</dbReference>
<dbReference type="GO" id="GO:0045892">
    <property type="term" value="P:negative regulation of DNA-templated transcription"/>
    <property type="evidence" value="ECO:0007669"/>
    <property type="project" value="TreeGrafter"/>
</dbReference>
<dbReference type="CDD" id="cd00673">
    <property type="entry name" value="AlaRS_core"/>
    <property type="match status" value="1"/>
</dbReference>
<dbReference type="FunFam" id="2.40.30.130:FF:000001">
    <property type="entry name" value="Alanine--tRNA ligase"/>
    <property type="match status" value="1"/>
</dbReference>
<dbReference type="FunFam" id="3.10.310.40:FF:000001">
    <property type="entry name" value="Alanine--tRNA ligase"/>
    <property type="match status" value="1"/>
</dbReference>
<dbReference type="FunFam" id="3.30.54.20:FF:000001">
    <property type="entry name" value="Alanine--tRNA ligase"/>
    <property type="match status" value="1"/>
</dbReference>
<dbReference type="FunFam" id="3.30.930.10:FF:000004">
    <property type="entry name" value="Alanine--tRNA ligase"/>
    <property type="match status" value="1"/>
</dbReference>
<dbReference type="FunFam" id="3.30.980.10:FF:000004">
    <property type="entry name" value="Alanine--tRNA ligase, cytoplasmic"/>
    <property type="match status" value="1"/>
</dbReference>
<dbReference type="Gene3D" id="2.40.30.130">
    <property type="match status" value="1"/>
</dbReference>
<dbReference type="Gene3D" id="3.10.310.40">
    <property type="match status" value="1"/>
</dbReference>
<dbReference type="Gene3D" id="3.30.54.20">
    <property type="match status" value="1"/>
</dbReference>
<dbReference type="Gene3D" id="6.10.250.550">
    <property type="match status" value="1"/>
</dbReference>
<dbReference type="Gene3D" id="3.30.930.10">
    <property type="entry name" value="Bira Bifunctional Protein, Domain 2"/>
    <property type="match status" value="1"/>
</dbReference>
<dbReference type="Gene3D" id="3.30.980.10">
    <property type="entry name" value="Threonyl-trna Synthetase, Chain A, domain 2"/>
    <property type="match status" value="1"/>
</dbReference>
<dbReference type="HAMAP" id="MF_00036_B">
    <property type="entry name" value="Ala_tRNA_synth_B"/>
    <property type="match status" value="1"/>
</dbReference>
<dbReference type="InterPro" id="IPR045864">
    <property type="entry name" value="aa-tRNA-synth_II/BPL/LPL"/>
</dbReference>
<dbReference type="InterPro" id="IPR002318">
    <property type="entry name" value="Ala-tRNA-lgiase_IIc"/>
</dbReference>
<dbReference type="InterPro" id="IPR018162">
    <property type="entry name" value="Ala-tRNA-ligase_IIc_anticod-bd"/>
</dbReference>
<dbReference type="InterPro" id="IPR018165">
    <property type="entry name" value="Ala-tRNA-synth_IIc_core"/>
</dbReference>
<dbReference type="InterPro" id="IPR018164">
    <property type="entry name" value="Ala-tRNA-synth_IIc_N"/>
</dbReference>
<dbReference type="InterPro" id="IPR050058">
    <property type="entry name" value="Ala-tRNA_ligase"/>
</dbReference>
<dbReference type="InterPro" id="IPR023033">
    <property type="entry name" value="Ala_tRNA_ligase_euk/bac"/>
</dbReference>
<dbReference type="InterPro" id="IPR003156">
    <property type="entry name" value="DHHA1_dom"/>
</dbReference>
<dbReference type="InterPro" id="IPR018163">
    <property type="entry name" value="Thr/Ala-tRNA-synth_IIc_edit"/>
</dbReference>
<dbReference type="InterPro" id="IPR009000">
    <property type="entry name" value="Transl_B-barrel_sf"/>
</dbReference>
<dbReference type="InterPro" id="IPR012947">
    <property type="entry name" value="tRNA_SAD"/>
</dbReference>
<dbReference type="NCBIfam" id="TIGR00344">
    <property type="entry name" value="alaS"/>
    <property type="match status" value="1"/>
</dbReference>
<dbReference type="PANTHER" id="PTHR11777:SF9">
    <property type="entry name" value="ALANINE--TRNA LIGASE, CYTOPLASMIC"/>
    <property type="match status" value="1"/>
</dbReference>
<dbReference type="PANTHER" id="PTHR11777">
    <property type="entry name" value="ALANYL-TRNA SYNTHETASE"/>
    <property type="match status" value="1"/>
</dbReference>
<dbReference type="Pfam" id="PF02272">
    <property type="entry name" value="DHHA1"/>
    <property type="match status" value="1"/>
</dbReference>
<dbReference type="Pfam" id="PF01411">
    <property type="entry name" value="tRNA-synt_2c"/>
    <property type="match status" value="1"/>
</dbReference>
<dbReference type="Pfam" id="PF07973">
    <property type="entry name" value="tRNA_SAD"/>
    <property type="match status" value="1"/>
</dbReference>
<dbReference type="PRINTS" id="PR00980">
    <property type="entry name" value="TRNASYNTHALA"/>
</dbReference>
<dbReference type="SMART" id="SM00863">
    <property type="entry name" value="tRNA_SAD"/>
    <property type="match status" value="1"/>
</dbReference>
<dbReference type="SUPFAM" id="SSF55681">
    <property type="entry name" value="Class II aaRS and biotin synthetases"/>
    <property type="match status" value="1"/>
</dbReference>
<dbReference type="SUPFAM" id="SSF101353">
    <property type="entry name" value="Putative anticodon-binding domain of alanyl-tRNA synthetase (AlaRS)"/>
    <property type="match status" value="1"/>
</dbReference>
<dbReference type="SUPFAM" id="SSF55186">
    <property type="entry name" value="ThrRS/AlaRS common domain"/>
    <property type="match status" value="1"/>
</dbReference>
<dbReference type="SUPFAM" id="SSF50447">
    <property type="entry name" value="Translation proteins"/>
    <property type="match status" value="1"/>
</dbReference>
<dbReference type="PROSITE" id="PS50860">
    <property type="entry name" value="AA_TRNA_LIGASE_II_ALA"/>
    <property type="match status" value="1"/>
</dbReference>
<accession>A1USS4</accession>
<protein>
    <recommendedName>
        <fullName evidence="1">Alanine--tRNA ligase</fullName>
        <ecNumber evidence="1">6.1.1.7</ecNumber>
    </recommendedName>
    <alternativeName>
        <fullName evidence="1">Alanyl-tRNA synthetase</fullName>
        <shortName evidence="1">AlaRS</shortName>
    </alternativeName>
</protein>
<feature type="chain" id="PRO_0000347503" description="Alanine--tRNA ligase">
    <location>
        <begin position="1"/>
        <end position="886"/>
    </location>
</feature>
<feature type="binding site" evidence="1">
    <location>
        <position position="564"/>
    </location>
    <ligand>
        <name>Zn(2+)</name>
        <dbReference type="ChEBI" id="CHEBI:29105"/>
    </ligand>
</feature>
<feature type="binding site" evidence="1">
    <location>
        <position position="568"/>
    </location>
    <ligand>
        <name>Zn(2+)</name>
        <dbReference type="ChEBI" id="CHEBI:29105"/>
    </ligand>
</feature>
<feature type="binding site" evidence="1">
    <location>
        <position position="676"/>
    </location>
    <ligand>
        <name>Zn(2+)</name>
        <dbReference type="ChEBI" id="CHEBI:29105"/>
    </ligand>
</feature>
<feature type="binding site" evidence="1">
    <location>
        <position position="680"/>
    </location>
    <ligand>
        <name>Zn(2+)</name>
        <dbReference type="ChEBI" id="CHEBI:29105"/>
    </ligand>
</feature>
<comment type="function">
    <text evidence="1">Catalyzes the attachment of alanine to tRNA(Ala) in a two-step reaction: alanine is first activated by ATP to form Ala-AMP and then transferred to the acceptor end of tRNA(Ala). Also edits incorrectly charged Ser-tRNA(Ala) and Gly-tRNA(Ala) via its editing domain.</text>
</comment>
<comment type="catalytic activity">
    <reaction evidence="1">
        <text>tRNA(Ala) + L-alanine + ATP = L-alanyl-tRNA(Ala) + AMP + diphosphate</text>
        <dbReference type="Rhea" id="RHEA:12540"/>
        <dbReference type="Rhea" id="RHEA-COMP:9657"/>
        <dbReference type="Rhea" id="RHEA-COMP:9923"/>
        <dbReference type="ChEBI" id="CHEBI:30616"/>
        <dbReference type="ChEBI" id="CHEBI:33019"/>
        <dbReference type="ChEBI" id="CHEBI:57972"/>
        <dbReference type="ChEBI" id="CHEBI:78442"/>
        <dbReference type="ChEBI" id="CHEBI:78497"/>
        <dbReference type="ChEBI" id="CHEBI:456215"/>
        <dbReference type="EC" id="6.1.1.7"/>
    </reaction>
</comment>
<comment type="cofactor">
    <cofactor evidence="1">
        <name>Zn(2+)</name>
        <dbReference type="ChEBI" id="CHEBI:29105"/>
    </cofactor>
    <text evidence="1">Binds 1 zinc ion per subunit.</text>
</comment>
<comment type="subcellular location">
    <subcellularLocation>
        <location evidence="1">Cytoplasm</location>
    </subcellularLocation>
</comment>
<comment type="domain">
    <text evidence="1">Consists of three domains; the N-terminal catalytic domain, the editing domain and the C-terminal C-Ala domain. The editing domain removes incorrectly charged amino acids, while the C-Ala domain, along with tRNA(Ala), serves as a bridge to cooperatively bring together the editing and aminoacylation centers thus stimulating deacylation of misacylated tRNAs.</text>
</comment>
<comment type="similarity">
    <text evidence="1">Belongs to the class-II aminoacyl-tRNA synthetase family.</text>
</comment>
<name>SYA_BARBK</name>
<organism>
    <name type="scientific">Bartonella bacilliformis (strain ATCC 35685 / KC583 / Herrer 020/F12,63)</name>
    <dbReference type="NCBI Taxonomy" id="360095"/>
    <lineage>
        <taxon>Bacteria</taxon>
        <taxon>Pseudomonadati</taxon>
        <taxon>Pseudomonadota</taxon>
        <taxon>Alphaproteobacteria</taxon>
        <taxon>Hyphomicrobiales</taxon>
        <taxon>Bartonellaceae</taxon>
        <taxon>Bartonella</taxon>
    </lineage>
</organism>
<sequence>MNSVNNIRSTFLDYFHRNGHEVLSSSPLVPRNDPTLMFTNAGMVQFKNVFTGLEKHSYNRATTAQKCVRAGGKHNDLDNVGYTARHHTFFEMLGNFSFSNYFKEEAIFYAWNLLTKEFCLSKDKLLVTVYHDDDVAAGLWRKISGLSEEKIIRIATNDNFWMMGDTGPCGPCSEIFYDHGDKIWGGPPGSADEDGDRFIEIWNLVFMQYEQLSKEKRIELPQPSIDTGMGLERIAAVLQGVHDNYDIDLFRTLIHASQEIIGVKATGDFFASHRVIADHLRSSAFLIADGIMPSNEGRGYVLRRIMRRAMRHAHLLGSKDLLMWRLVPVLISEMGQAYPELVRAESLISEILKLEETRFRKTLERGLGLLNEASTHLEEGDYFNGEVAFKLYDTYGFPLDLTQDALRRRGISVDVDAFDKAMKRQKAEARANWSGSGDCVTETVWFSIRDQVGATEFLGYETEKAEGIITALIRDGEVVDHIDLGQKAMIVVNQTPFYGESGGQVGDSGIISGANFIFEVHDTQKKGDNVFIHIGEIKTGQAKKHDCVELIVDSARRRKIRANHSATHLLHESLRQTLGSHVVQKGSFVSPDRLRFDFSHPKSISSEELKKIEDLANDIVLQNSKVTTRLMAIDDAIAEGAMALFGEKYGDEVRVISMGNNLEQTGSKKWWSIELCGGTHVQRTGDIGLIHIISETSVAAGVRRIEALTATAARLYLHGQDRRVYEIAGLLKTSPADVQERVQTLLDERRKLEKELNDSRKKIALNGGSVNSQGDIQTINGISFMGGVVSNILPKDLKALVDSGKKKIGSGVVAFISVSEDGKGSAVVGVTDDLTDTLNAVDLVRIISVTLGGQGGGGRRDMAQAGGSEGGKADEALVALKDSLKG</sequence>
<evidence type="ECO:0000255" key="1">
    <source>
        <dbReference type="HAMAP-Rule" id="MF_00036"/>
    </source>
</evidence>